<evidence type="ECO:0000255" key="1">
    <source>
        <dbReference type="HAMAP-Rule" id="MF_01343"/>
    </source>
</evidence>
<evidence type="ECO:0000305" key="2"/>
<reference key="1">
    <citation type="journal article" date="2009" name="Appl. Environ. Microbiol.">
        <title>Three genomes from the phylum Acidobacteria provide insight into the lifestyles of these microorganisms in soils.</title>
        <authorList>
            <person name="Ward N.L."/>
            <person name="Challacombe J.F."/>
            <person name="Janssen P.H."/>
            <person name="Henrissat B."/>
            <person name="Coutinho P.M."/>
            <person name="Wu M."/>
            <person name="Xie G."/>
            <person name="Haft D.H."/>
            <person name="Sait M."/>
            <person name="Badger J."/>
            <person name="Barabote R.D."/>
            <person name="Bradley B."/>
            <person name="Brettin T.S."/>
            <person name="Brinkac L.M."/>
            <person name="Bruce D."/>
            <person name="Creasy T."/>
            <person name="Daugherty S.C."/>
            <person name="Davidsen T.M."/>
            <person name="DeBoy R.T."/>
            <person name="Detter J.C."/>
            <person name="Dodson R.J."/>
            <person name="Durkin A.S."/>
            <person name="Ganapathy A."/>
            <person name="Gwinn-Giglio M."/>
            <person name="Han C.S."/>
            <person name="Khouri H."/>
            <person name="Kiss H."/>
            <person name="Kothari S.P."/>
            <person name="Madupu R."/>
            <person name="Nelson K.E."/>
            <person name="Nelson W.C."/>
            <person name="Paulsen I."/>
            <person name="Penn K."/>
            <person name="Ren Q."/>
            <person name="Rosovitz M.J."/>
            <person name="Selengut J.D."/>
            <person name="Shrivastava S."/>
            <person name="Sullivan S.A."/>
            <person name="Tapia R."/>
            <person name="Thompson L.S."/>
            <person name="Watkins K.L."/>
            <person name="Yang Q."/>
            <person name="Yu C."/>
            <person name="Zafar N."/>
            <person name="Zhou L."/>
            <person name="Kuske C.R."/>
        </authorList>
    </citation>
    <scope>NUCLEOTIDE SEQUENCE [LARGE SCALE GENOMIC DNA]</scope>
    <source>
        <strain>ATCC 51196 / DSM 11244 / BCRC 80197 / JCM 7670 / NBRC 15755 / NCIMB 13165 / 161</strain>
    </source>
</reference>
<comment type="function">
    <text evidence="1">One of the primary rRNA binding proteins, it binds directly to 16S rRNA where it helps nucleate assembly of the platform of the 30S subunit by binding and bridging several RNA helices of the 16S rRNA.</text>
</comment>
<comment type="function">
    <text evidence="1">Forms an intersubunit bridge (bridge B4) with the 23S rRNA of the 50S subunit in the ribosome.</text>
</comment>
<comment type="subunit">
    <text evidence="1">Part of the 30S ribosomal subunit. Forms a bridge to the 50S subunit in the 70S ribosome, contacting the 23S rRNA.</text>
</comment>
<comment type="similarity">
    <text evidence="1">Belongs to the universal ribosomal protein uS15 family.</text>
</comment>
<dbReference type="EMBL" id="CP001472">
    <property type="protein sequence ID" value="ACO32504.1"/>
    <property type="molecule type" value="Genomic_DNA"/>
</dbReference>
<dbReference type="RefSeq" id="WP_012680552.1">
    <property type="nucleotide sequence ID" value="NC_012483.1"/>
</dbReference>
<dbReference type="SMR" id="C1F8M0"/>
<dbReference type="FunCoup" id="C1F8M0">
    <property type="interactions" value="488"/>
</dbReference>
<dbReference type="STRING" id="240015.ACP_0148"/>
<dbReference type="KEGG" id="aca:ACP_0148"/>
<dbReference type="eggNOG" id="COG0184">
    <property type="taxonomic scope" value="Bacteria"/>
</dbReference>
<dbReference type="HOGENOM" id="CLU_148518_0_0_0"/>
<dbReference type="InParanoid" id="C1F8M0"/>
<dbReference type="OrthoDB" id="9799262at2"/>
<dbReference type="Proteomes" id="UP000002207">
    <property type="component" value="Chromosome"/>
</dbReference>
<dbReference type="GO" id="GO:0022627">
    <property type="term" value="C:cytosolic small ribosomal subunit"/>
    <property type="evidence" value="ECO:0007669"/>
    <property type="project" value="TreeGrafter"/>
</dbReference>
<dbReference type="GO" id="GO:0019843">
    <property type="term" value="F:rRNA binding"/>
    <property type="evidence" value="ECO:0007669"/>
    <property type="project" value="UniProtKB-UniRule"/>
</dbReference>
<dbReference type="GO" id="GO:0003735">
    <property type="term" value="F:structural constituent of ribosome"/>
    <property type="evidence" value="ECO:0007669"/>
    <property type="project" value="InterPro"/>
</dbReference>
<dbReference type="GO" id="GO:0006412">
    <property type="term" value="P:translation"/>
    <property type="evidence" value="ECO:0007669"/>
    <property type="project" value="UniProtKB-UniRule"/>
</dbReference>
<dbReference type="CDD" id="cd00353">
    <property type="entry name" value="Ribosomal_S15p_S13e"/>
    <property type="match status" value="1"/>
</dbReference>
<dbReference type="FunFam" id="1.10.287.10:FF:000002">
    <property type="entry name" value="30S ribosomal protein S15"/>
    <property type="match status" value="1"/>
</dbReference>
<dbReference type="Gene3D" id="6.10.250.3130">
    <property type="match status" value="1"/>
</dbReference>
<dbReference type="Gene3D" id="1.10.287.10">
    <property type="entry name" value="S15/NS1, RNA-binding"/>
    <property type="match status" value="1"/>
</dbReference>
<dbReference type="HAMAP" id="MF_01343_B">
    <property type="entry name" value="Ribosomal_uS15_B"/>
    <property type="match status" value="1"/>
</dbReference>
<dbReference type="InterPro" id="IPR000589">
    <property type="entry name" value="Ribosomal_uS15"/>
</dbReference>
<dbReference type="InterPro" id="IPR005290">
    <property type="entry name" value="Ribosomal_uS15_bac-type"/>
</dbReference>
<dbReference type="InterPro" id="IPR009068">
    <property type="entry name" value="uS15_NS1_RNA-bd_sf"/>
</dbReference>
<dbReference type="NCBIfam" id="TIGR00952">
    <property type="entry name" value="S15_bact"/>
    <property type="match status" value="1"/>
</dbReference>
<dbReference type="PANTHER" id="PTHR23321">
    <property type="entry name" value="RIBOSOMAL PROTEIN S15, BACTERIAL AND ORGANELLAR"/>
    <property type="match status" value="1"/>
</dbReference>
<dbReference type="PANTHER" id="PTHR23321:SF26">
    <property type="entry name" value="SMALL RIBOSOMAL SUBUNIT PROTEIN US15M"/>
    <property type="match status" value="1"/>
</dbReference>
<dbReference type="Pfam" id="PF00312">
    <property type="entry name" value="Ribosomal_S15"/>
    <property type="match status" value="1"/>
</dbReference>
<dbReference type="SMART" id="SM01387">
    <property type="entry name" value="Ribosomal_S15"/>
    <property type="match status" value="1"/>
</dbReference>
<dbReference type="SUPFAM" id="SSF47060">
    <property type="entry name" value="S15/NS1 RNA-binding domain"/>
    <property type="match status" value="1"/>
</dbReference>
<dbReference type="PROSITE" id="PS00362">
    <property type="entry name" value="RIBOSOMAL_S15"/>
    <property type="match status" value="1"/>
</dbReference>
<organism>
    <name type="scientific">Acidobacterium capsulatum (strain ATCC 51196 / DSM 11244 / BCRC 80197 / JCM 7670 / NBRC 15755 / NCIMB 13165 / 161)</name>
    <dbReference type="NCBI Taxonomy" id="240015"/>
    <lineage>
        <taxon>Bacteria</taxon>
        <taxon>Pseudomonadati</taxon>
        <taxon>Acidobacteriota</taxon>
        <taxon>Terriglobia</taxon>
        <taxon>Terriglobales</taxon>
        <taxon>Acidobacteriaceae</taxon>
        <taxon>Acidobacterium</taxon>
    </lineage>
</organism>
<keyword id="KW-1185">Reference proteome</keyword>
<keyword id="KW-0687">Ribonucleoprotein</keyword>
<keyword id="KW-0689">Ribosomal protein</keyword>
<keyword id="KW-0694">RNA-binding</keyword>
<keyword id="KW-0699">rRNA-binding</keyword>
<sequence length="88" mass="10151">MLAPVKKTEIISQFRTHDSDTGSPQVQIAILSERIGELTEHFKTHAKDHSSRRGLLKLVSKRRRLLDYLKLHDTDSYRDVIGKLGIRK</sequence>
<name>RS15_ACIC5</name>
<gene>
    <name evidence="1" type="primary">rpsO</name>
    <name type="ordered locus">ACP_0148</name>
</gene>
<accession>C1F8M0</accession>
<proteinExistence type="inferred from homology"/>
<feature type="chain" id="PRO_1000166392" description="Small ribosomal subunit protein uS15">
    <location>
        <begin position="1"/>
        <end position="88"/>
    </location>
</feature>
<protein>
    <recommendedName>
        <fullName evidence="1">Small ribosomal subunit protein uS15</fullName>
    </recommendedName>
    <alternativeName>
        <fullName evidence="2">30S ribosomal protein S15</fullName>
    </alternativeName>
</protein>